<accession>A4IQ81</accession>
<gene>
    <name evidence="1" type="primary">trpA</name>
    <name type="ordered locus">GTNG_2133</name>
</gene>
<dbReference type="EC" id="4.2.1.20" evidence="1"/>
<dbReference type="EMBL" id="CP000557">
    <property type="protein sequence ID" value="ABO67485.1"/>
    <property type="molecule type" value="Genomic_DNA"/>
</dbReference>
<dbReference type="RefSeq" id="WP_011887691.1">
    <property type="nucleotide sequence ID" value="NC_009328.1"/>
</dbReference>
<dbReference type="SMR" id="A4IQ81"/>
<dbReference type="KEGG" id="gtn:GTNG_2133"/>
<dbReference type="eggNOG" id="COG0159">
    <property type="taxonomic scope" value="Bacteria"/>
</dbReference>
<dbReference type="HOGENOM" id="CLU_016734_0_0_9"/>
<dbReference type="UniPathway" id="UPA00035">
    <property type="reaction ID" value="UER00044"/>
</dbReference>
<dbReference type="Proteomes" id="UP000001578">
    <property type="component" value="Chromosome"/>
</dbReference>
<dbReference type="GO" id="GO:0005829">
    <property type="term" value="C:cytosol"/>
    <property type="evidence" value="ECO:0007669"/>
    <property type="project" value="TreeGrafter"/>
</dbReference>
<dbReference type="GO" id="GO:0004834">
    <property type="term" value="F:tryptophan synthase activity"/>
    <property type="evidence" value="ECO:0007669"/>
    <property type="project" value="UniProtKB-UniRule"/>
</dbReference>
<dbReference type="CDD" id="cd04724">
    <property type="entry name" value="Tryptophan_synthase_alpha"/>
    <property type="match status" value="1"/>
</dbReference>
<dbReference type="FunFam" id="3.20.20.70:FF:000037">
    <property type="entry name" value="Tryptophan synthase alpha chain"/>
    <property type="match status" value="1"/>
</dbReference>
<dbReference type="Gene3D" id="3.20.20.70">
    <property type="entry name" value="Aldolase class I"/>
    <property type="match status" value="1"/>
</dbReference>
<dbReference type="HAMAP" id="MF_00131">
    <property type="entry name" value="Trp_synth_alpha"/>
    <property type="match status" value="1"/>
</dbReference>
<dbReference type="InterPro" id="IPR013785">
    <property type="entry name" value="Aldolase_TIM"/>
</dbReference>
<dbReference type="InterPro" id="IPR011060">
    <property type="entry name" value="RibuloseP-bd_barrel"/>
</dbReference>
<dbReference type="InterPro" id="IPR018204">
    <property type="entry name" value="Trp_synthase_alpha_AS"/>
</dbReference>
<dbReference type="InterPro" id="IPR002028">
    <property type="entry name" value="Trp_synthase_suA"/>
</dbReference>
<dbReference type="NCBIfam" id="TIGR00262">
    <property type="entry name" value="trpA"/>
    <property type="match status" value="1"/>
</dbReference>
<dbReference type="PANTHER" id="PTHR43406:SF1">
    <property type="entry name" value="TRYPTOPHAN SYNTHASE ALPHA CHAIN, CHLOROPLASTIC"/>
    <property type="match status" value="1"/>
</dbReference>
<dbReference type="PANTHER" id="PTHR43406">
    <property type="entry name" value="TRYPTOPHAN SYNTHASE, ALPHA CHAIN"/>
    <property type="match status" value="1"/>
</dbReference>
<dbReference type="Pfam" id="PF00290">
    <property type="entry name" value="Trp_syntA"/>
    <property type="match status" value="1"/>
</dbReference>
<dbReference type="SUPFAM" id="SSF51366">
    <property type="entry name" value="Ribulose-phoshate binding barrel"/>
    <property type="match status" value="1"/>
</dbReference>
<dbReference type="PROSITE" id="PS00167">
    <property type="entry name" value="TRP_SYNTHASE_ALPHA"/>
    <property type="match status" value="1"/>
</dbReference>
<evidence type="ECO:0000255" key="1">
    <source>
        <dbReference type="HAMAP-Rule" id="MF_00131"/>
    </source>
</evidence>
<reference key="1">
    <citation type="journal article" date="2007" name="Proc. Natl. Acad. Sci. U.S.A.">
        <title>Genome and proteome of long-chain alkane degrading Geobacillus thermodenitrificans NG80-2 isolated from a deep-subsurface oil reservoir.</title>
        <authorList>
            <person name="Feng L."/>
            <person name="Wang W."/>
            <person name="Cheng J."/>
            <person name="Ren Y."/>
            <person name="Zhao G."/>
            <person name="Gao C."/>
            <person name="Tang Y."/>
            <person name="Liu X."/>
            <person name="Han W."/>
            <person name="Peng X."/>
            <person name="Liu R."/>
            <person name="Wang L."/>
        </authorList>
    </citation>
    <scope>NUCLEOTIDE SEQUENCE [LARGE SCALE GENOMIC DNA]</scope>
    <source>
        <strain>NG80-2</strain>
    </source>
</reference>
<proteinExistence type="inferred from homology"/>
<name>TRPA_GEOTN</name>
<organism>
    <name type="scientific">Geobacillus thermodenitrificans (strain NG80-2)</name>
    <dbReference type="NCBI Taxonomy" id="420246"/>
    <lineage>
        <taxon>Bacteria</taxon>
        <taxon>Bacillati</taxon>
        <taxon>Bacillota</taxon>
        <taxon>Bacilli</taxon>
        <taxon>Bacillales</taxon>
        <taxon>Anoxybacillaceae</taxon>
        <taxon>Geobacillus</taxon>
    </lineage>
</organism>
<keyword id="KW-0028">Amino-acid biosynthesis</keyword>
<keyword id="KW-0057">Aromatic amino acid biosynthesis</keyword>
<keyword id="KW-0456">Lyase</keyword>
<keyword id="KW-0822">Tryptophan biosynthesis</keyword>
<sequence length="268" mass="28663">MRLPVNRSLFIPFIVAGDPSADLTVDLALALQDAGADVLELGVPYSDPLADGPTIQRAAARALAGQMTLPKAIQLVADMRKKGVKIPIIIFTYYNPVLQLGEESFFALAQENGADGVLIPDLPFEESGPLLELSERFGLPLISLVAPTSKQRIEQIASAAQGFLYCVSSLGVTGVRETLPESLGHFLGEVKRHSRVPVVVGFGISTPEQVAMLKDACDGVVVGSALVQKIEQLLERLQTLEEKNAAIAEFASYARSLAAPLREPCSSR</sequence>
<protein>
    <recommendedName>
        <fullName evidence="1">Tryptophan synthase alpha chain</fullName>
        <ecNumber evidence="1">4.2.1.20</ecNumber>
    </recommendedName>
</protein>
<comment type="function">
    <text evidence="1">The alpha subunit is responsible for the aldol cleavage of indoleglycerol phosphate to indole and glyceraldehyde 3-phosphate.</text>
</comment>
<comment type="catalytic activity">
    <reaction evidence="1">
        <text>(1S,2R)-1-C-(indol-3-yl)glycerol 3-phosphate + L-serine = D-glyceraldehyde 3-phosphate + L-tryptophan + H2O</text>
        <dbReference type="Rhea" id="RHEA:10532"/>
        <dbReference type="ChEBI" id="CHEBI:15377"/>
        <dbReference type="ChEBI" id="CHEBI:33384"/>
        <dbReference type="ChEBI" id="CHEBI:57912"/>
        <dbReference type="ChEBI" id="CHEBI:58866"/>
        <dbReference type="ChEBI" id="CHEBI:59776"/>
        <dbReference type="EC" id="4.2.1.20"/>
    </reaction>
</comment>
<comment type="pathway">
    <text evidence="1">Amino-acid biosynthesis; L-tryptophan biosynthesis; L-tryptophan from chorismate: step 5/5.</text>
</comment>
<comment type="subunit">
    <text evidence="1">Tetramer of two alpha and two beta chains.</text>
</comment>
<comment type="similarity">
    <text evidence="1">Belongs to the TrpA family.</text>
</comment>
<feature type="chain" id="PRO_1000018208" description="Tryptophan synthase alpha chain">
    <location>
        <begin position="1"/>
        <end position="268"/>
    </location>
</feature>
<feature type="active site" description="Proton acceptor" evidence="1">
    <location>
        <position position="40"/>
    </location>
</feature>
<feature type="active site" description="Proton acceptor" evidence="1">
    <location>
        <position position="51"/>
    </location>
</feature>